<comment type="function">
    <text evidence="1">Catalyzes the condensation of ATP and 5-phosphoribose 1-diphosphate to form N'-(5'-phosphoribosyl)-ATP (PR-ATP). Has a crucial role in the pathway because the rate of histidine biosynthesis seems to be controlled primarily by regulation of HisG enzymatic activity.</text>
</comment>
<comment type="catalytic activity">
    <reaction evidence="1">
        <text>1-(5-phospho-beta-D-ribosyl)-ATP + diphosphate = 5-phospho-alpha-D-ribose 1-diphosphate + ATP</text>
        <dbReference type="Rhea" id="RHEA:18473"/>
        <dbReference type="ChEBI" id="CHEBI:30616"/>
        <dbReference type="ChEBI" id="CHEBI:33019"/>
        <dbReference type="ChEBI" id="CHEBI:58017"/>
        <dbReference type="ChEBI" id="CHEBI:73183"/>
        <dbReference type="EC" id="2.4.2.17"/>
    </reaction>
</comment>
<comment type="cofactor">
    <cofactor evidence="1">
        <name>Mg(2+)</name>
        <dbReference type="ChEBI" id="CHEBI:18420"/>
    </cofactor>
</comment>
<comment type="activity regulation">
    <text evidence="1">Feedback inhibited by histidine.</text>
</comment>
<comment type="pathway">
    <text evidence="1">Amino-acid biosynthesis; L-histidine biosynthesis; L-histidine from 5-phospho-alpha-D-ribose 1-diphosphate: step 1/9.</text>
</comment>
<comment type="subunit">
    <text evidence="1">Equilibrium between an active dimeric form, an inactive hexameric form and higher aggregates. Interconversion between the various forms is largely reversible and is influenced by the natural substrates and inhibitors of the enzyme.</text>
</comment>
<comment type="subcellular location">
    <subcellularLocation>
        <location evidence="1">Cytoplasm</location>
    </subcellularLocation>
</comment>
<comment type="similarity">
    <text evidence="1">Belongs to the ATP phosphoribosyltransferase family. Long subfamily.</text>
</comment>
<proteinExistence type="inferred from homology"/>
<gene>
    <name evidence="1" type="primary">hisG</name>
    <name type="ordered locus">YPDSF_1427</name>
</gene>
<keyword id="KW-0028">Amino-acid biosynthesis</keyword>
<keyword id="KW-0067">ATP-binding</keyword>
<keyword id="KW-0963">Cytoplasm</keyword>
<keyword id="KW-0328">Glycosyltransferase</keyword>
<keyword id="KW-0368">Histidine biosynthesis</keyword>
<keyword id="KW-0460">Magnesium</keyword>
<keyword id="KW-0479">Metal-binding</keyword>
<keyword id="KW-0547">Nucleotide-binding</keyword>
<keyword id="KW-0808">Transferase</keyword>
<protein>
    <recommendedName>
        <fullName evidence="1">ATP phosphoribosyltransferase</fullName>
        <shortName evidence="1">ATP-PRT</shortName>
        <shortName evidence="1">ATP-PRTase</shortName>
        <ecNumber evidence="1">2.4.2.17</ecNumber>
    </recommendedName>
</protein>
<feature type="chain" id="PRO_1000004521" description="ATP phosphoribosyltransferase">
    <location>
        <begin position="1"/>
        <end position="299"/>
    </location>
</feature>
<evidence type="ECO:0000255" key="1">
    <source>
        <dbReference type="HAMAP-Rule" id="MF_00079"/>
    </source>
</evidence>
<reference key="1">
    <citation type="submission" date="2007-02" db="EMBL/GenBank/DDBJ databases">
        <title>Complete sequence of chromosome of Yersinia pestis Pestoides F.</title>
        <authorList>
            <consortium name="US DOE Joint Genome Institute"/>
            <person name="Copeland A."/>
            <person name="Lucas S."/>
            <person name="Lapidus A."/>
            <person name="Barry K."/>
            <person name="Detter J.C."/>
            <person name="Glavina del Rio T."/>
            <person name="Hammon N."/>
            <person name="Israni S."/>
            <person name="Dalin E."/>
            <person name="Tice H."/>
            <person name="Pitluck S."/>
            <person name="Di Bartolo G."/>
            <person name="Chain P."/>
            <person name="Malfatti S."/>
            <person name="Shin M."/>
            <person name="Vergez L."/>
            <person name="Schmutz J."/>
            <person name="Larimer F."/>
            <person name="Land M."/>
            <person name="Hauser L."/>
            <person name="Worsham P."/>
            <person name="Chu M."/>
            <person name="Bearden S."/>
            <person name="Garcia E."/>
            <person name="Richardson P."/>
        </authorList>
    </citation>
    <scope>NUCLEOTIDE SEQUENCE [LARGE SCALE GENOMIC DNA]</scope>
    <source>
        <strain>Pestoides F</strain>
    </source>
</reference>
<sequence length="299" mass="33456">MLDKTRLRIAMQKSGRLSDESQELLSRCGIKINLQQQRLIAFAENMPIDILRVRDDDIPGLVMDGVVDLGIIGENVLEEELLNRRAQGDDPRYFTLRRLDFGGCRLSLAAPLDAEYTGPQCLQDTRIATSYPHILKQYLDKQGVRFKSCLLNGSVEVAPRAGLADAICDLVSTGATLEANGLREVEVIYRSKACLIQRDGEMSVDKQQLIDRLMTRIQGVIQARESKYIMMHAPSERLDEIITLLPGAERPTILPLAGDKSRVAMHMVSSETLFWETMEKLKALGASSILVLPIEKMME</sequence>
<dbReference type="EC" id="2.4.2.17" evidence="1"/>
<dbReference type="EMBL" id="CP000668">
    <property type="protein sequence ID" value="ABP39814.1"/>
    <property type="molecule type" value="Genomic_DNA"/>
</dbReference>
<dbReference type="RefSeq" id="WP_002211896.1">
    <property type="nucleotide sequence ID" value="NZ_CP009715.1"/>
</dbReference>
<dbReference type="SMR" id="A4TKK2"/>
<dbReference type="GeneID" id="96665168"/>
<dbReference type="KEGG" id="ypp:YPDSF_1427"/>
<dbReference type="PATRIC" id="fig|386656.14.peg.2357"/>
<dbReference type="UniPathway" id="UPA00031">
    <property type="reaction ID" value="UER00006"/>
</dbReference>
<dbReference type="GO" id="GO:0005737">
    <property type="term" value="C:cytoplasm"/>
    <property type="evidence" value="ECO:0007669"/>
    <property type="project" value="UniProtKB-SubCell"/>
</dbReference>
<dbReference type="GO" id="GO:0005524">
    <property type="term" value="F:ATP binding"/>
    <property type="evidence" value="ECO:0007669"/>
    <property type="project" value="UniProtKB-KW"/>
</dbReference>
<dbReference type="GO" id="GO:0003879">
    <property type="term" value="F:ATP phosphoribosyltransferase activity"/>
    <property type="evidence" value="ECO:0007669"/>
    <property type="project" value="UniProtKB-UniRule"/>
</dbReference>
<dbReference type="GO" id="GO:0000287">
    <property type="term" value="F:magnesium ion binding"/>
    <property type="evidence" value="ECO:0007669"/>
    <property type="project" value="UniProtKB-UniRule"/>
</dbReference>
<dbReference type="GO" id="GO:0000105">
    <property type="term" value="P:L-histidine biosynthetic process"/>
    <property type="evidence" value="ECO:0007669"/>
    <property type="project" value="UniProtKB-UniRule"/>
</dbReference>
<dbReference type="CDD" id="cd13592">
    <property type="entry name" value="PBP2_HisGL2"/>
    <property type="match status" value="1"/>
</dbReference>
<dbReference type="FunFam" id="3.30.70.120:FF:000002">
    <property type="entry name" value="ATP phosphoribosyltransferase"/>
    <property type="match status" value="1"/>
</dbReference>
<dbReference type="FunFam" id="3.40.190.10:FF:000008">
    <property type="entry name" value="ATP phosphoribosyltransferase"/>
    <property type="match status" value="1"/>
</dbReference>
<dbReference type="Gene3D" id="3.30.70.120">
    <property type="match status" value="1"/>
</dbReference>
<dbReference type="Gene3D" id="3.40.190.10">
    <property type="entry name" value="Periplasmic binding protein-like II"/>
    <property type="match status" value="2"/>
</dbReference>
<dbReference type="HAMAP" id="MF_00079">
    <property type="entry name" value="HisG_Long"/>
    <property type="match status" value="1"/>
</dbReference>
<dbReference type="InterPro" id="IPR020621">
    <property type="entry name" value="ATP-PRT_HisG_long"/>
</dbReference>
<dbReference type="InterPro" id="IPR013820">
    <property type="entry name" value="ATP_PRibTrfase_cat"/>
</dbReference>
<dbReference type="InterPro" id="IPR018198">
    <property type="entry name" value="ATP_PRibTrfase_CS"/>
</dbReference>
<dbReference type="InterPro" id="IPR001348">
    <property type="entry name" value="ATP_PRibTrfase_HisG"/>
</dbReference>
<dbReference type="InterPro" id="IPR013115">
    <property type="entry name" value="HisG_C"/>
</dbReference>
<dbReference type="InterPro" id="IPR011322">
    <property type="entry name" value="N-reg_PII-like_a/b"/>
</dbReference>
<dbReference type="InterPro" id="IPR015867">
    <property type="entry name" value="N-reg_PII/ATP_PRibTrfase_C"/>
</dbReference>
<dbReference type="NCBIfam" id="TIGR00070">
    <property type="entry name" value="hisG"/>
    <property type="match status" value="1"/>
</dbReference>
<dbReference type="NCBIfam" id="TIGR03455">
    <property type="entry name" value="HisG_C-term"/>
    <property type="match status" value="1"/>
</dbReference>
<dbReference type="PANTHER" id="PTHR21403:SF8">
    <property type="entry name" value="ATP PHOSPHORIBOSYLTRANSFERASE"/>
    <property type="match status" value="1"/>
</dbReference>
<dbReference type="PANTHER" id="PTHR21403">
    <property type="entry name" value="ATP PHOSPHORIBOSYLTRANSFERASE ATP-PRTASE"/>
    <property type="match status" value="1"/>
</dbReference>
<dbReference type="Pfam" id="PF01634">
    <property type="entry name" value="HisG"/>
    <property type="match status" value="1"/>
</dbReference>
<dbReference type="Pfam" id="PF08029">
    <property type="entry name" value="HisG_C"/>
    <property type="match status" value="1"/>
</dbReference>
<dbReference type="SUPFAM" id="SSF54913">
    <property type="entry name" value="GlnB-like"/>
    <property type="match status" value="1"/>
</dbReference>
<dbReference type="SUPFAM" id="SSF53850">
    <property type="entry name" value="Periplasmic binding protein-like II"/>
    <property type="match status" value="1"/>
</dbReference>
<dbReference type="PROSITE" id="PS01316">
    <property type="entry name" value="ATP_P_PHORIBOSYLTR"/>
    <property type="match status" value="1"/>
</dbReference>
<accession>A4TKK2</accession>
<organism>
    <name type="scientific">Yersinia pestis (strain Pestoides F)</name>
    <dbReference type="NCBI Taxonomy" id="386656"/>
    <lineage>
        <taxon>Bacteria</taxon>
        <taxon>Pseudomonadati</taxon>
        <taxon>Pseudomonadota</taxon>
        <taxon>Gammaproteobacteria</taxon>
        <taxon>Enterobacterales</taxon>
        <taxon>Yersiniaceae</taxon>
        <taxon>Yersinia</taxon>
    </lineage>
</organism>
<name>HIS1_YERPP</name>